<keyword id="KW-0560">Oxidoreductase</keyword>
<keyword id="KW-0663">Pyridoxal phosphate</keyword>
<proteinExistence type="inferred from homology"/>
<protein>
    <recommendedName>
        <fullName evidence="1">Glycine dehydrogenase (decarboxylating)</fullName>
        <ecNumber evidence="1">1.4.4.2</ecNumber>
    </recommendedName>
    <alternativeName>
        <fullName evidence="1">Glycine cleavage system P-protein</fullName>
    </alternativeName>
    <alternativeName>
        <fullName evidence="1">Glycine decarboxylase</fullName>
    </alternativeName>
    <alternativeName>
        <fullName evidence="1">Glycine dehydrogenase (aminomethyl-transferring)</fullName>
    </alternativeName>
</protein>
<dbReference type="EC" id="1.4.4.2" evidence="1"/>
<dbReference type="EMBL" id="CP000036">
    <property type="protein sequence ID" value="ABB67594.1"/>
    <property type="molecule type" value="Genomic_DNA"/>
</dbReference>
<dbReference type="RefSeq" id="WP_000195052.1">
    <property type="nucleotide sequence ID" value="NC_007613.1"/>
</dbReference>
<dbReference type="SMR" id="Q31WG4"/>
<dbReference type="KEGG" id="sbo:SBO_3089"/>
<dbReference type="HOGENOM" id="CLU_004620_1_1_6"/>
<dbReference type="Proteomes" id="UP000007067">
    <property type="component" value="Chromosome"/>
</dbReference>
<dbReference type="GO" id="GO:0005829">
    <property type="term" value="C:cytosol"/>
    <property type="evidence" value="ECO:0007669"/>
    <property type="project" value="TreeGrafter"/>
</dbReference>
<dbReference type="GO" id="GO:0005960">
    <property type="term" value="C:glycine cleavage complex"/>
    <property type="evidence" value="ECO:0007669"/>
    <property type="project" value="TreeGrafter"/>
</dbReference>
<dbReference type="GO" id="GO:0016594">
    <property type="term" value="F:glycine binding"/>
    <property type="evidence" value="ECO:0007669"/>
    <property type="project" value="TreeGrafter"/>
</dbReference>
<dbReference type="GO" id="GO:0004375">
    <property type="term" value="F:glycine dehydrogenase (decarboxylating) activity"/>
    <property type="evidence" value="ECO:0007669"/>
    <property type="project" value="UniProtKB-EC"/>
</dbReference>
<dbReference type="GO" id="GO:0030170">
    <property type="term" value="F:pyridoxal phosphate binding"/>
    <property type="evidence" value="ECO:0007669"/>
    <property type="project" value="TreeGrafter"/>
</dbReference>
<dbReference type="GO" id="GO:0019464">
    <property type="term" value="P:glycine decarboxylation via glycine cleavage system"/>
    <property type="evidence" value="ECO:0007669"/>
    <property type="project" value="UniProtKB-UniRule"/>
</dbReference>
<dbReference type="CDD" id="cd00613">
    <property type="entry name" value="GDC-P"/>
    <property type="match status" value="2"/>
</dbReference>
<dbReference type="FunFam" id="3.40.640.10:FF:000005">
    <property type="entry name" value="Glycine dehydrogenase (decarboxylating), mitochondrial"/>
    <property type="match status" value="1"/>
</dbReference>
<dbReference type="FunFam" id="3.90.1150.10:FF:000007">
    <property type="entry name" value="Glycine dehydrogenase (decarboxylating), mitochondrial"/>
    <property type="match status" value="1"/>
</dbReference>
<dbReference type="FunFam" id="3.40.640.10:FF:000007">
    <property type="entry name" value="glycine dehydrogenase (Decarboxylating), mitochondrial"/>
    <property type="match status" value="1"/>
</dbReference>
<dbReference type="Gene3D" id="3.90.1150.10">
    <property type="entry name" value="Aspartate Aminotransferase, domain 1"/>
    <property type="match status" value="1"/>
</dbReference>
<dbReference type="Gene3D" id="3.40.640.10">
    <property type="entry name" value="Type I PLP-dependent aspartate aminotransferase-like (Major domain)"/>
    <property type="match status" value="2"/>
</dbReference>
<dbReference type="HAMAP" id="MF_00711">
    <property type="entry name" value="GcvP"/>
    <property type="match status" value="1"/>
</dbReference>
<dbReference type="InterPro" id="IPR003437">
    <property type="entry name" value="GcvP"/>
</dbReference>
<dbReference type="InterPro" id="IPR049316">
    <property type="entry name" value="GDC-P_C"/>
</dbReference>
<dbReference type="InterPro" id="IPR049315">
    <property type="entry name" value="GDC-P_N"/>
</dbReference>
<dbReference type="InterPro" id="IPR020581">
    <property type="entry name" value="GDC_P"/>
</dbReference>
<dbReference type="InterPro" id="IPR015424">
    <property type="entry name" value="PyrdxlP-dep_Trfase"/>
</dbReference>
<dbReference type="InterPro" id="IPR015421">
    <property type="entry name" value="PyrdxlP-dep_Trfase_major"/>
</dbReference>
<dbReference type="InterPro" id="IPR015422">
    <property type="entry name" value="PyrdxlP-dep_Trfase_small"/>
</dbReference>
<dbReference type="NCBIfam" id="TIGR00461">
    <property type="entry name" value="gcvP"/>
    <property type="match status" value="1"/>
</dbReference>
<dbReference type="NCBIfam" id="NF003346">
    <property type="entry name" value="PRK04366.1"/>
    <property type="match status" value="1"/>
</dbReference>
<dbReference type="PANTHER" id="PTHR11773:SF13">
    <property type="entry name" value="GLYCINE DEHYDROGENASE (DECARBOXYLATING)"/>
    <property type="match status" value="1"/>
</dbReference>
<dbReference type="PANTHER" id="PTHR11773">
    <property type="entry name" value="GLYCINE DEHYDROGENASE, DECARBOXYLATING"/>
    <property type="match status" value="1"/>
</dbReference>
<dbReference type="Pfam" id="PF21478">
    <property type="entry name" value="GcvP2_C"/>
    <property type="match status" value="1"/>
</dbReference>
<dbReference type="Pfam" id="PF02347">
    <property type="entry name" value="GDC-P"/>
    <property type="match status" value="2"/>
</dbReference>
<dbReference type="SUPFAM" id="SSF53383">
    <property type="entry name" value="PLP-dependent transferases"/>
    <property type="match status" value="2"/>
</dbReference>
<gene>
    <name evidence="1" type="primary">gcvP</name>
    <name type="ordered locus">SBO_3089</name>
</gene>
<accession>Q31WG4</accession>
<evidence type="ECO:0000255" key="1">
    <source>
        <dbReference type="HAMAP-Rule" id="MF_00711"/>
    </source>
</evidence>
<organism>
    <name type="scientific">Shigella boydii serotype 4 (strain Sb227)</name>
    <dbReference type="NCBI Taxonomy" id="300268"/>
    <lineage>
        <taxon>Bacteria</taxon>
        <taxon>Pseudomonadati</taxon>
        <taxon>Pseudomonadota</taxon>
        <taxon>Gammaproteobacteria</taxon>
        <taxon>Enterobacterales</taxon>
        <taxon>Enterobacteriaceae</taxon>
        <taxon>Shigella</taxon>
    </lineage>
</organism>
<comment type="function">
    <text evidence="1">The glycine cleavage system catalyzes the degradation of glycine. The P protein binds the alpha-amino group of glycine through its pyridoxal phosphate cofactor; CO(2) is released and the remaining methylamine moiety is then transferred to the lipoamide cofactor of the H protein.</text>
</comment>
<comment type="catalytic activity">
    <reaction evidence="1">
        <text>N(6)-[(R)-lipoyl]-L-lysyl-[glycine-cleavage complex H protein] + glycine + H(+) = N(6)-[(R)-S(8)-aminomethyldihydrolipoyl]-L-lysyl-[glycine-cleavage complex H protein] + CO2</text>
        <dbReference type="Rhea" id="RHEA:24304"/>
        <dbReference type="Rhea" id="RHEA-COMP:10494"/>
        <dbReference type="Rhea" id="RHEA-COMP:10495"/>
        <dbReference type="ChEBI" id="CHEBI:15378"/>
        <dbReference type="ChEBI" id="CHEBI:16526"/>
        <dbReference type="ChEBI" id="CHEBI:57305"/>
        <dbReference type="ChEBI" id="CHEBI:83099"/>
        <dbReference type="ChEBI" id="CHEBI:83143"/>
        <dbReference type="EC" id="1.4.4.2"/>
    </reaction>
</comment>
<comment type="cofactor">
    <cofactor evidence="1">
        <name>pyridoxal 5'-phosphate</name>
        <dbReference type="ChEBI" id="CHEBI:597326"/>
    </cofactor>
</comment>
<comment type="subunit">
    <text evidence="1">The glycine cleavage system is composed of four proteins: P, T, L and H.</text>
</comment>
<comment type="similarity">
    <text evidence="1">Belongs to the GcvP family.</text>
</comment>
<reference key="1">
    <citation type="journal article" date="2005" name="Nucleic Acids Res.">
        <title>Genome dynamics and diversity of Shigella species, the etiologic agents of bacillary dysentery.</title>
        <authorList>
            <person name="Yang F."/>
            <person name="Yang J."/>
            <person name="Zhang X."/>
            <person name="Chen L."/>
            <person name="Jiang Y."/>
            <person name="Yan Y."/>
            <person name="Tang X."/>
            <person name="Wang J."/>
            <person name="Xiong Z."/>
            <person name="Dong J."/>
            <person name="Xue Y."/>
            <person name="Zhu Y."/>
            <person name="Xu X."/>
            <person name="Sun L."/>
            <person name="Chen S."/>
            <person name="Nie H."/>
            <person name="Peng J."/>
            <person name="Xu J."/>
            <person name="Wang Y."/>
            <person name="Yuan Z."/>
            <person name="Wen Y."/>
            <person name="Yao Z."/>
            <person name="Shen Y."/>
            <person name="Qiang B."/>
            <person name="Hou Y."/>
            <person name="Yu J."/>
            <person name="Jin Q."/>
        </authorList>
    </citation>
    <scope>NUCLEOTIDE SEQUENCE [LARGE SCALE GENOMIC DNA]</scope>
    <source>
        <strain>Sb227</strain>
    </source>
</reference>
<name>GCSP_SHIBS</name>
<sequence>MTQTLSQLENSGAFIERHIGPDAAQQQEMLNAVGAQSLNALTGQIVPKDIQLATPPQVGAPATEYAALAELKAIASRNKRFTSYIGMGYTAVQLPPVILRNMLENPGWYTAYTPYQPEVSQGRLEALLNFQQVTLDLTGLDMASASLLDEATAAAEAMAMAKRVSKLKNANRFFVASDVHPQTLDVVRTRAETFGFEVIVDDAQKVLDHQDVFGVLLQQVGTTGEIHDYTALISELKSRKIVVSVAADIMALVLLTAPGKQGADIVFGSAQRFGVPMGYGGPHAAFFAAKDEYKRSMPGRIIGVSKDAAGNTALRMAMQTREQHIRREKANSNICTSQVLLANIASLYAVYHGPVGLKRIANRIHRLTDILAAGLQQKGLKLRHAHYFDTLCVEVADKAGVLARAEAAEINLRSDILNAVGITLDETTTRENVMQLFSVLLGDNHGLEIDTLDKDVAHDSRSIQPAMLRDDEILTHPVFNRYHSETEMMRYMHSLERKDLALNQAMIPLGSCTMKLNAAAEMIPITWPEFAELHPFCPPEQAEGYQQMIAQLADWLVKLTGYDAVCMQPNSGAQGEYAGLLAIRHYHESRNEGHRDICLIPASAHGTNPASAHMAGMQVVVVACDKNGNIDLTDLRAKAEQAGDNLSCIMVTYPSTHGVYEETIREVCEVVHQFGGQVYLDGANMNAQVGITSPGFIGADVSHLNLHKTFCIPHGGGGPGMGPIGVKAHLAPFVPGHSVVQIEGMLTRQGAVSAAPFGSASILPISWMYIRMMGAEGLKKASQVAILNANYIASRLQDAFPVLYTGRDGRVAHECILDIRPLKEETSISELDIAKRLIDYGFHAPTMSFPVAGTLMVEPTESESKVELDRFIDAMLAIRAEIDQVKAGVWPLEDNPLVNAPHIQSELVAEWAHPYSHEVAVFPAGVADKYWPTVKRLDDVYGDRNLFCSCVPISEYQ</sequence>
<feature type="chain" id="PRO_1000045616" description="Glycine dehydrogenase (decarboxylating)">
    <location>
        <begin position="1"/>
        <end position="957"/>
    </location>
</feature>
<feature type="modified residue" description="N6-(pyridoxal phosphate)lysine" evidence="1">
    <location>
        <position position="708"/>
    </location>
</feature>